<dbReference type="EC" id="1.10.3.-"/>
<dbReference type="EMBL" id="AP008934">
    <property type="protein sequence ID" value="BAE18877.1"/>
    <property type="molecule type" value="Genomic_DNA"/>
</dbReference>
<dbReference type="RefSeq" id="WP_002483712.1">
    <property type="nucleotide sequence ID" value="NZ_MTGA01000039.1"/>
</dbReference>
<dbReference type="SMR" id="Q49WI2"/>
<dbReference type="GeneID" id="66867907"/>
<dbReference type="KEGG" id="ssp:SSP1732"/>
<dbReference type="eggNOG" id="COG1845">
    <property type="taxonomic scope" value="Bacteria"/>
</dbReference>
<dbReference type="HOGENOM" id="CLU_044071_3_2_9"/>
<dbReference type="OrthoDB" id="9810850at2"/>
<dbReference type="Proteomes" id="UP000006371">
    <property type="component" value="Chromosome"/>
</dbReference>
<dbReference type="GO" id="GO:0005886">
    <property type="term" value="C:plasma membrane"/>
    <property type="evidence" value="ECO:0007669"/>
    <property type="project" value="UniProtKB-SubCell"/>
</dbReference>
<dbReference type="GO" id="GO:0004129">
    <property type="term" value="F:cytochrome-c oxidase activity"/>
    <property type="evidence" value="ECO:0007669"/>
    <property type="project" value="InterPro"/>
</dbReference>
<dbReference type="GO" id="GO:0019646">
    <property type="term" value="P:aerobic electron transport chain"/>
    <property type="evidence" value="ECO:0007669"/>
    <property type="project" value="InterPro"/>
</dbReference>
<dbReference type="GO" id="GO:0042773">
    <property type="term" value="P:ATP synthesis coupled electron transport"/>
    <property type="evidence" value="ECO:0007669"/>
    <property type="project" value="InterPro"/>
</dbReference>
<dbReference type="CDD" id="cd02863">
    <property type="entry name" value="Ubiquinol_oxidase_III"/>
    <property type="match status" value="1"/>
</dbReference>
<dbReference type="FunFam" id="1.20.120.80:FF:000001">
    <property type="entry name" value="Cytochrome (Ubi)quinol oxidase subunit III"/>
    <property type="match status" value="1"/>
</dbReference>
<dbReference type="Gene3D" id="1.20.120.80">
    <property type="entry name" value="Cytochrome c oxidase, subunit III, four-helix bundle"/>
    <property type="match status" value="1"/>
</dbReference>
<dbReference type="InterPro" id="IPR024791">
    <property type="entry name" value="Cyt_c/ubiquinol_Oxase_su3"/>
</dbReference>
<dbReference type="InterPro" id="IPR000298">
    <property type="entry name" value="Cyt_c_oxidase-like_su3"/>
</dbReference>
<dbReference type="InterPro" id="IPR035973">
    <property type="entry name" value="Cyt_c_oxidase_su3-like_sf"/>
</dbReference>
<dbReference type="InterPro" id="IPR013833">
    <property type="entry name" value="Cyt_c_oxidase_su3_a-hlx"/>
</dbReference>
<dbReference type="InterPro" id="IPR014246">
    <property type="entry name" value="QoxC"/>
</dbReference>
<dbReference type="InterPro" id="IPR033946">
    <property type="entry name" value="Ubiquinol_oxase_su3_dom"/>
</dbReference>
<dbReference type="NCBIfam" id="TIGR02897">
    <property type="entry name" value="QoxC"/>
    <property type="match status" value="1"/>
</dbReference>
<dbReference type="PANTHER" id="PTHR11403:SF2">
    <property type="entry name" value="CYTOCHROME BO(3) UBIQUINOL OXIDASE SUBUNIT 3"/>
    <property type="match status" value="1"/>
</dbReference>
<dbReference type="PANTHER" id="PTHR11403">
    <property type="entry name" value="CYTOCHROME C OXIDASE SUBUNIT III"/>
    <property type="match status" value="1"/>
</dbReference>
<dbReference type="Pfam" id="PF00510">
    <property type="entry name" value="COX3"/>
    <property type="match status" value="1"/>
</dbReference>
<dbReference type="SUPFAM" id="SSF81452">
    <property type="entry name" value="Cytochrome c oxidase subunit III-like"/>
    <property type="match status" value="1"/>
</dbReference>
<dbReference type="PROSITE" id="PS50253">
    <property type="entry name" value="COX3"/>
    <property type="match status" value="1"/>
</dbReference>
<sequence>MSHDANTIDQRSHEGNLNKLGFWVFLTAEFSLFGTLFATLLTLQHGGDYAGKMTTELFELPLVLIMTFALLISSYTCGIAIYYMRKEKEKLMLIWMIITVLLGMVFVGFEIYEFAHYVHEGVNLTIGSYWSSFFILLGTHGAHVSLGIVWIICLLIQVAMRGLNKDNAPKLFIVSLYWHFLDVVWIFIFTAVYMIGMVFSG</sequence>
<name>QOX3_STAS1</name>
<organism>
    <name type="scientific">Staphylococcus saprophyticus subsp. saprophyticus (strain ATCC 15305 / DSM 20229 / NCIMB 8711 / NCTC 7292 / S-41)</name>
    <dbReference type="NCBI Taxonomy" id="342451"/>
    <lineage>
        <taxon>Bacteria</taxon>
        <taxon>Bacillati</taxon>
        <taxon>Bacillota</taxon>
        <taxon>Bacilli</taxon>
        <taxon>Bacillales</taxon>
        <taxon>Staphylococcaceae</taxon>
        <taxon>Staphylococcus</taxon>
    </lineage>
</organism>
<feature type="chain" id="PRO_0000275896" description="Probable quinol oxidase subunit 3">
    <location>
        <begin position="1"/>
        <end position="201"/>
    </location>
</feature>
<feature type="transmembrane region" description="Helical" evidence="2">
    <location>
        <begin position="20"/>
        <end position="40"/>
    </location>
</feature>
<feature type="transmembrane region" description="Helical" evidence="2">
    <location>
        <begin position="62"/>
        <end position="82"/>
    </location>
</feature>
<feature type="transmembrane region" description="Helical" evidence="2">
    <location>
        <begin position="91"/>
        <end position="111"/>
    </location>
</feature>
<feature type="transmembrane region" description="Helical" evidence="2">
    <location>
        <begin position="133"/>
        <end position="153"/>
    </location>
</feature>
<feature type="transmembrane region" description="Helical" evidence="2">
    <location>
        <begin position="180"/>
        <end position="200"/>
    </location>
</feature>
<reference key="1">
    <citation type="journal article" date="2005" name="Proc. Natl. Acad. Sci. U.S.A.">
        <title>Whole genome sequence of Staphylococcus saprophyticus reveals the pathogenesis of uncomplicated urinary tract infection.</title>
        <authorList>
            <person name="Kuroda M."/>
            <person name="Yamashita A."/>
            <person name="Hirakawa H."/>
            <person name="Kumano M."/>
            <person name="Morikawa K."/>
            <person name="Higashide M."/>
            <person name="Maruyama A."/>
            <person name="Inose Y."/>
            <person name="Matoba K."/>
            <person name="Toh H."/>
            <person name="Kuhara S."/>
            <person name="Hattori M."/>
            <person name="Ohta T."/>
        </authorList>
    </citation>
    <scope>NUCLEOTIDE SEQUENCE [LARGE SCALE GENOMIC DNA]</scope>
    <source>
        <strain>ATCC 15305 / DSM 20229 / NCIMB 8711 / NCTC 7292 / S-41</strain>
    </source>
</reference>
<accession>Q49WI2</accession>
<keyword id="KW-1003">Cell membrane</keyword>
<keyword id="KW-0472">Membrane</keyword>
<keyword id="KW-0560">Oxidoreductase</keyword>
<keyword id="KW-1185">Reference proteome</keyword>
<keyword id="KW-0812">Transmembrane</keyword>
<keyword id="KW-1133">Transmembrane helix</keyword>
<evidence type="ECO:0000250" key="1"/>
<evidence type="ECO:0000255" key="2"/>
<evidence type="ECO:0000305" key="3"/>
<comment type="function">
    <text evidence="1">Catalyzes quinol oxidation with the concomitant reduction of oxygen to water.</text>
</comment>
<comment type="catalytic activity">
    <reaction>
        <text>2 a quinol + O2 = 2 a quinone + 2 H2O</text>
        <dbReference type="Rhea" id="RHEA:55376"/>
        <dbReference type="ChEBI" id="CHEBI:15377"/>
        <dbReference type="ChEBI" id="CHEBI:15379"/>
        <dbReference type="ChEBI" id="CHEBI:24646"/>
        <dbReference type="ChEBI" id="CHEBI:132124"/>
    </reaction>
</comment>
<comment type="subcellular location">
    <subcellularLocation>
        <location evidence="1">Cell membrane</location>
        <topology evidence="1">Multi-pass membrane protein</topology>
    </subcellularLocation>
</comment>
<comment type="similarity">
    <text evidence="3">Belongs to the cytochrome c oxidase subunit 3 family.</text>
</comment>
<protein>
    <recommendedName>
        <fullName>Probable quinol oxidase subunit 3</fullName>
        <ecNumber>1.10.3.-</ecNumber>
    </recommendedName>
    <alternativeName>
        <fullName>Quinol oxidase polypeptide III</fullName>
    </alternativeName>
</protein>
<gene>
    <name type="primary">qoxC</name>
    <name type="ordered locus">SSP1732</name>
</gene>
<proteinExistence type="inferred from homology"/>